<evidence type="ECO:0000255" key="1"/>
<evidence type="ECO:0000255" key="2">
    <source>
        <dbReference type="PROSITE-ProRule" id="PRU00258"/>
    </source>
</evidence>
<evidence type="ECO:0000255" key="3">
    <source>
        <dbReference type="PROSITE-ProRule" id="PRU01348"/>
    </source>
</evidence>
<evidence type="ECO:0000255" key="4">
    <source>
        <dbReference type="PROSITE-ProRule" id="PRU01363"/>
    </source>
</evidence>
<evidence type="ECO:0000255" key="5">
    <source>
        <dbReference type="PROSITE-ProRule" id="PRU10022"/>
    </source>
</evidence>
<evidence type="ECO:0000269" key="6">
    <source>
    </source>
</evidence>
<evidence type="ECO:0000303" key="7">
    <source>
    </source>
</evidence>
<evidence type="ECO:0000303" key="8">
    <source>
    </source>
</evidence>
<evidence type="ECO:0000305" key="9">
    <source>
    </source>
</evidence>
<evidence type="ECO:0000305" key="10">
    <source>
    </source>
</evidence>
<comment type="function">
    <text evidence="6 10">Highly reducing polyketide synthase; part of the gene cluster that mediates the biosynthesis of 10,11-dehydrocurvularin, a prevalent fungal phytotoxin with heat shock response and immune-modulatory activities (PubMed:23335766, PubMed:26493380). The highly reducing polyketide synthase curS1 is responsible for biosynthesis up to the tetraketide stage (PubMed:23335766). The non-reducing polyketide synthase curS2 then conducts four additional chain extension cycles, producing the unreduced part of the nascent octaketide from C-1 to C-8 in 10,11-dehydrocurvularin (PubMed:23335766).</text>
</comment>
<comment type="pathway">
    <text evidence="6">Mycotoxin biosynthesis.</text>
</comment>
<accession>L7X8J4</accession>
<feature type="chain" id="PRO_0000438387" description="Highly reducing polyketide synthase curS1">
    <location>
        <begin position="1"/>
        <end position="2387"/>
    </location>
</feature>
<feature type="domain" description="Ketosynthase family 3 (KS3)" evidence="3 9 10">
    <location>
        <begin position="10"/>
        <end position="433"/>
    </location>
</feature>
<feature type="domain" description="PKS/mFAS DH" evidence="4">
    <location>
        <begin position="940"/>
        <end position="1259"/>
    </location>
</feature>
<feature type="domain" description="Carrier" evidence="2 9 10">
    <location>
        <begin position="2302"/>
        <end position="2379"/>
    </location>
</feature>
<feature type="region of interest" description="Malonyl-CoA:ACP transacylase (MAT) domain" evidence="1 9 10">
    <location>
        <begin position="551"/>
        <end position="891"/>
    </location>
</feature>
<feature type="region of interest" description="N-terminal hotdog fold" evidence="4">
    <location>
        <begin position="940"/>
        <end position="1075"/>
    </location>
</feature>
<feature type="region of interest" description="Dehydratase (DH) domain" evidence="1 9 10">
    <location>
        <begin position="942"/>
        <end position="1256"/>
    </location>
</feature>
<feature type="region of interest" description="C-terminal hotdog fold" evidence="4">
    <location>
        <begin position="1103"/>
        <end position="1259"/>
    </location>
</feature>
<feature type="region of interest" description="Enoylreductase (ER) domain" evidence="1 9 10">
    <location>
        <begin position="1673"/>
        <end position="1987"/>
    </location>
</feature>
<feature type="region of interest" description="Catalytic ketoreductase (KRc) domain" evidence="1 9 10">
    <location>
        <begin position="2011"/>
        <end position="2191"/>
    </location>
</feature>
<feature type="active site" description="For beta-ketoacyl synthase activity" evidence="3">
    <location>
        <position position="182"/>
    </location>
</feature>
<feature type="active site" description="For beta-ketoacyl synthase activity" evidence="3">
    <location>
        <position position="316"/>
    </location>
</feature>
<feature type="active site" description="For beta-ketoacyl synthase activity" evidence="3">
    <location>
        <position position="356"/>
    </location>
</feature>
<feature type="active site" description="For malonyltransferase activity" evidence="5">
    <location>
        <position position="641"/>
    </location>
</feature>
<feature type="active site" description="Proton acceptor; for dehydratase activity" evidence="4">
    <location>
        <position position="972"/>
    </location>
</feature>
<feature type="active site" description="Proton donor; for dehydratase activity" evidence="4">
    <location>
        <position position="1169"/>
    </location>
</feature>
<feature type="modified residue" description="O-(pantetheine 4'-phosphoryl)serine" evidence="2">
    <location>
        <position position="2339"/>
    </location>
</feature>
<keyword id="KW-0511">Multifunctional enzyme</keyword>
<keyword id="KW-0560">Oxidoreductase</keyword>
<keyword id="KW-0596">Phosphopantetheine</keyword>
<keyword id="KW-0597">Phosphoprotein</keyword>
<keyword id="KW-0808">Transferase</keyword>
<organism>
    <name type="scientific">Aspergillus terreus</name>
    <dbReference type="NCBI Taxonomy" id="33178"/>
    <lineage>
        <taxon>Eukaryota</taxon>
        <taxon>Fungi</taxon>
        <taxon>Dikarya</taxon>
        <taxon>Ascomycota</taxon>
        <taxon>Pezizomycotina</taxon>
        <taxon>Eurotiomycetes</taxon>
        <taxon>Eurotiomycetidae</taxon>
        <taxon>Eurotiales</taxon>
        <taxon>Aspergillaceae</taxon>
        <taxon>Aspergillus</taxon>
        <taxon>Aspergillus subgen. Circumdati</taxon>
    </lineage>
</organism>
<name>CURS1_ASPTE</name>
<protein>
    <recommendedName>
        <fullName evidence="7">Highly reducing polyketide synthase curS1</fullName>
        <ecNumber evidence="6">2.3.1.-</ecNumber>
    </recommendedName>
    <alternativeName>
        <fullName evidence="8">Dehydrocurvularin biosynthesis protein 1</fullName>
    </alternativeName>
</protein>
<sequence>MPSAQHSVGDVPIAVVGLSCRFPGDASTPSKFWDMLKNGKDAYSPTSTRWNSDAFYHPGDGRLNSLPTKGGHFLKEDPYVFDAAFFNITAAEAIALDPKQRIAMEVTYEAFENAGMSLQQISGSQTACYIGSGPSDYRGAVERDFLHNPKYHLLGTGDEMISNRISHFLDIHGPSATVQTACSSSLMATHLACQSLRSGESEMAITGGISLMLTPDFTTHLNNLTFLNPEGLSKAFDESAGGYGRGEGCGIIILKRLADAIQDGDDIRAVIRGTGANSDGFTQGVTMPSFEAQAALIRQVYSSNGLDYSTQYVEAHGTGTKAGDPIETRAIYSTIGKGSPKPRKLFVGSVKPNIGHLESAAGVSGIIKGILSMEHNLIPPNLHFTKANPAIPFDEWNMAVPTKLTPWPVAATKRMSVSGFGMGGTNGHVVLESFDSTRSTNGSGYSGGFSTFEKTRTKKRLFVFSSHDQAGFKRNANALAEHLDTVGSVASSSDFMANLAHTLSGARSSLSWRATCIAENKIELRDYLTTKPGDGASRDATNATRAPRIGFVFTGQGAQWARMGVEMLDRPVFRDSVAQSTHYLQAMGCVWDPVAELKKTQADSRLSQPEISQPICSVLQIALVDELRSWGVTPSKVVGHSSGEIAAAYSIGALSHRDAIAAAYFRGVATVRLRADAPDLKGGMMAVGCSRDEAEELIEQSKLDGTAAVACVNSPSSVTLSGDVDTLEQLRAICDEHKVFVRRLKVEMAYHSRHMNRVSGTYAEFIADLQPIPREYNENEDDDSIQTMLSSVTGQEVAPELLGPYYWVRNLVSPVLFSDAVKEMVAPDEAEGDNTVDLLIEIGPHGALGGPVEQILGHHGVKHITYKSMLTRGRNALETSLELASELFLKGVPIDISQVNSDLNPRRLTDLPPYQWNHSKVFRHETRIQRELVMRQFPSKSIIGAQVPMMDESQHVWRNFLRLSDEPWIRGHKVGSTVLFPAAGLIGMALEAAQQLVEPSKTARSLRLRDISFFAAMALSEDVPTEVIMHLRPHLLATSGSTPAAWWEFTISSCAGIDNLRDNCRGLITIDYAETTSEQMASEDASLEASRIAHYHRVREESSYTYSKEDFYSQFEKIAWNYGEAFRGVEKVYLGDGQATYDVKLVDIGETASKGQLDRPFLIHAGALDSILQGCLGSTYRNGRFDMDKPVLPTFIGQMEISLDIPGDAGYVLPAVCESKRHGFKELSSNIYAFDSAVSKVNLSVVDYRVSELENDSGEQDSQQLEVDPAEITSEVRWNYALEVLEPEEIKKVVLAVAAEDRVVELIRLYLHNNPAATVIELVPDYEALERATMSLLPPGTILPSHIKYAVAATGSKSENQVDIENVIGTPFDLGDLDDTLPTDIAAADLLVIPQSVNNHKDLGVLLTRLTSFGKPDASLVLAVNSSVNVSNSMLESKGFRRVFDLENSVALYKSRQSGHTNGHTNGHTNGTSTRSELFIIEPLATSSRINSFSGALQVTLREHGYPVFVTNWTEISARPAADLEGNTFISLLELEQPLLDALSEPDFYSVRKLLLNSDRLLWITAGDNPSMGVVDGIRRTMRSEVAGLKFQVLHLSSLDTALQCGPALAGRIMTTDTKDDEFQERDGMLQVARIFNSPEGNEGVRRCLEDSVRVERLGEQERALRLTIMKPGLMDTLTFIEDDRMTGPLGATEIEVDVKATGVNFKDIMAAMGLVEVSLIGQEASGIVTATGSTAASRFKPGDRVTLLWEGMHVTKLRIDHRLAVHIPDSMSFEEAAALPMVHTTAYHALVNVAKLRPGQSVLIHAAAGGVGQAALQLATHLGLVAYVTVGSEDKRRLLMEKYNVPEAHIFHSRDTSFAKAIKRVTGGRGVDCVLNSLSGELLRVSWTCLAPFGTFVEIGLRDITNNMRLDMRPFSRSTTFAFINIANFFDPEGLDALGQILSDAFALVHKGVLGTAYPLTVYPVSELETAFRTMQQGKHRGKLVLSFGDNAQAPVLCKARDSLRLSPKSTYLFIGGLGGLGRSLAREFVACGARHIAFISRSGDSSAEAKATVQALTTLGANVKAYRADVSEEAAFLSAMQQCATDLPPIAGVVQMAMLLRDTLFEKISYTDWTQPMRPKIQGTLNLHNYFSATRPLDFFVICSSISGIFGYPGQTQYAAANTFQDALARHRRNQGLKGVAVDLGIMRDVGILAEQGTTGKLADWEAILGIREKPFHALMKSVINSEWKGAVPPPAQLCTGLGTADIMARFGLERPEHFSDPRFGPLNVLSIESSSSLSTDQDTASSPSTRLAAATTLDEAVVIITDALVHKMAEILQMPLSEVDPGRPMYRYGVDSLVALEVRNWITRELQANMALLEILAAEPMRVFAGKIAEKSKLVAGRKG</sequence>
<reference key="1">
    <citation type="journal article" date="2013" name="Appl. Environ. Microbiol.">
        <title>Characterization of the biosynthetic genes for 10,11-dehydrocurvularin, a heat shock response-modulating anticancer fungal polyketide from Aspergillus terreus.</title>
        <authorList>
            <person name="Xu Y."/>
            <person name="Espinosa-Artiles P."/>
            <person name="Schubert V."/>
            <person name="Xu Y.M."/>
            <person name="Zhang W."/>
            <person name="Lin M."/>
            <person name="Gunatilaka A.A."/>
            <person name="Sussmuth R."/>
            <person name="Molnar I."/>
        </authorList>
    </citation>
    <scope>NUCLEOTIDE SEQUENCE [GENOMIC DNA]</scope>
    <scope>FUNCTION</scope>
    <scope>CATALYTIC ACTIVITY</scope>
    <scope>PATHWAY</scope>
    <source>
        <strain>AH-02-30-F7</strain>
    </source>
</reference>
<reference key="2">
    <citation type="journal article" date="2015" name="ChemBioChem">
        <title>Comparison of 10,11-dehydrocurvularin polyketide synthases from Alternaria cinerariae and Aspergillus terreus highlights key structural motifs.</title>
        <authorList>
            <person name="Cochrane R.V."/>
            <person name="Gao Z."/>
            <person name="Lambkin G.R."/>
            <person name="Xu W."/>
            <person name="Winter J.M."/>
            <person name="Marcus S.L."/>
            <person name="Tang Y."/>
            <person name="Vederas J.C."/>
        </authorList>
    </citation>
    <scope>FUNCTION</scope>
    <scope>DOMAIN</scope>
</reference>
<dbReference type="EC" id="2.3.1.-" evidence="6"/>
<dbReference type="EMBL" id="JX971534">
    <property type="protein sequence ID" value="AGC95324.1"/>
    <property type="molecule type" value="Genomic_DNA"/>
</dbReference>
<dbReference type="SMR" id="L7X8J4"/>
<dbReference type="VEuPathDB" id="FungiDB:ATEG_07282"/>
<dbReference type="GO" id="GO:0004312">
    <property type="term" value="F:fatty acid synthase activity"/>
    <property type="evidence" value="ECO:0007669"/>
    <property type="project" value="TreeGrafter"/>
</dbReference>
<dbReference type="GO" id="GO:0016491">
    <property type="term" value="F:oxidoreductase activity"/>
    <property type="evidence" value="ECO:0007669"/>
    <property type="project" value="UniProtKB-KW"/>
</dbReference>
<dbReference type="GO" id="GO:0031177">
    <property type="term" value="F:phosphopantetheine binding"/>
    <property type="evidence" value="ECO:0007669"/>
    <property type="project" value="InterPro"/>
</dbReference>
<dbReference type="GO" id="GO:0006633">
    <property type="term" value="P:fatty acid biosynthetic process"/>
    <property type="evidence" value="ECO:0007669"/>
    <property type="project" value="TreeGrafter"/>
</dbReference>
<dbReference type="GO" id="GO:0030639">
    <property type="term" value="P:polyketide biosynthetic process"/>
    <property type="evidence" value="ECO:0007669"/>
    <property type="project" value="UniProtKB-ARBA"/>
</dbReference>
<dbReference type="CDD" id="cd05195">
    <property type="entry name" value="enoyl_red"/>
    <property type="match status" value="1"/>
</dbReference>
<dbReference type="CDD" id="cd00833">
    <property type="entry name" value="PKS"/>
    <property type="match status" value="1"/>
</dbReference>
<dbReference type="FunFam" id="3.40.50.720:FF:000209">
    <property type="entry name" value="Polyketide synthase Pks12"/>
    <property type="match status" value="1"/>
</dbReference>
<dbReference type="Gene3D" id="3.40.47.10">
    <property type="match status" value="1"/>
</dbReference>
<dbReference type="Gene3D" id="1.10.1200.10">
    <property type="entry name" value="ACP-like"/>
    <property type="match status" value="1"/>
</dbReference>
<dbReference type="Gene3D" id="3.40.366.10">
    <property type="entry name" value="Malonyl-Coenzyme A Acyl Carrier Protein, domain 2"/>
    <property type="match status" value="1"/>
</dbReference>
<dbReference type="Gene3D" id="3.90.180.10">
    <property type="entry name" value="Medium-chain alcohol dehydrogenases, catalytic domain"/>
    <property type="match status" value="1"/>
</dbReference>
<dbReference type="Gene3D" id="3.40.50.720">
    <property type="entry name" value="NAD(P)-binding Rossmann-like Domain"/>
    <property type="match status" value="1"/>
</dbReference>
<dbReference type="Gene3D" id="3.10.129.110">
    <property type="entry name" value="Polyketide synthase dehydratase"/>
    <property type="match status" value="1"/>
</dbReference>
<dbReference type="InterPro" id="IPR001227">
    <property type="entry name" value="Ac_transferase_dom_sf"/>
</dbReference>
<dbReference type="InterPro" id="IPR036736">
    <property type="entry name" value="ACP-like_sf"/>
</dbReference>
<dbReference type="InterPro" id="IPR014043">
    <property type="entry name" value="Acyl_transferase_dom"/>
</dbReference>
<dbReference type="InterPro" id="IPR016035">
    <property type="entry name" value="Acyl_Trfase/lysoPLipase"/>
</dbReference>
<dbReference type="InterPro" id="IPR013154">
    <property type="entry name" value="ADH-like_N"/>
</dbReference>
<dbReference type="InterPro" id="IPR011032">
    <property type="entry name" value="GroES-like_sf"/>
</dbReference>
<dbReference type="InterPro" id="IPR014031">
    <property type="entry name" value="Ketoacyl_synth_C"/>
</dbReference>
<dbReference type="InterPro" id="IPR014030">
    <property type="entry name" value="Ketoacyl_synth_N"/>
</dbReference>
<dbReference type="InterPro" id="IPR016036">
    <property type="entry name" value="Malonyl_transacylase_ACP-bd"/>
</dbReference>
<dbReference type="InterPro" id="IPR036291">
    <property type="entry name" value="NAD(P)-bd_dom_sf"/>
</dbReference>
<dbReference type="InterPro" id="IPR056501">
    <property type="entry name" value="NAD-bd_HRPKS_sdrA"/>
</dbReference>
<dbReference type="InterPro" id="IPR032821">
    <property type="entry name" value="PKS_assoc"/>
</dbReference>
<dbReference type="InterPro" id="IPR020841">
    <property type="entry name" value="PKS_Beta-ketoAc_synthase_dom"/>
</dbReference>
<dbReference type="InterPro" id="IPR042104">
    <property type="entry name" value="PKS_dehydratase_sf"/>
</dbReference>
<dbReference type="InterPro" id="IPR020807">
    <property type="entry name" value="PKS_DH"/>
</dbReference>
<dbReference type="InterPro" id="IPR049551">
    <property type="entry name" value="PKS_DH_C"/>
</dbReference>
<dbReference type="InterPro" id="IPR049552">
    <property type="entry name" value="PKS_DH_N"/>
</dbReference>
<dbReference type="InterPro" id="IPR020843">
    <property type="entry name" value="PKS_ER"/>
</dbReference>
<dbReference type="InterPro" id="IPR013968">
    <property type="entry name" value="PKS_KR"/>
</dbReference>
<dbReference type="InterPro" id="IPR049900">
    <property type="entry name" value="PKS_mFAS_DH"/>
</dbReference>
<dbReference type="InterPro" id="IPR050091">
    <property type="entry name" value="PKS_NRPS_Biosynth_Enz"/>
</dbReference>
<dbReference type="InterPro" id="IPR020806">
    <property type="entry name" value="PKS_PP-bd"/>
</dbReference>
<dbReference type="InterPro" id="IPR009081">
    <property type="entry name" value="PP-bd_ACP"/>
</dbReference>
<dbReference type="InterPro" id="IPR006162">
    <property type="entry name" value="Ppantetheine_attach_site"/>
</dbReference>
<dbReference type="InterPro" id="IPR016039">
    <property type="entry name" value="Thiolase-like"/>
</dbReference>
<dbReference type="PANTHER" id="PTHR43775:SF29">
    <property type="entry name" value="ASPERFURANONE POLYKETIDE SYNTHASE AFOG-RELATED"/>
    <property type="match status" value="1"/>
</dbReference>
<dbReference type="PANTHER" id="PTHR43775">
    <property type="entry name" value="FATTY ACID SYNTHASE"/>
    <property type="match status" value="1"/>
</dbReference>
<dbReference type="Pfam" id="PF23297">
    <property type="entry name" value="ACP_SdgA_C"/>
    <property type="match status" value="1"/>
</dbReference>
<dbReference type="Pfam" id="PF00698">
    <property type="entry name" value="Acyl_transf_1"/>
    <property type="match status" value="1"/>
</dbReference>
<dbReference type="Pfam" id="PF08240">
    <property type="entry name" value="ADH_N"/>
    <property type="match status" value="1"/>
</dbReference>
<dbReference type="Pfam" id="PF13602">
    <property type="entry name" value="ADH_zinc_N_2"/>
    <property type="match status" value="1"/>
</dbReference>
<dbReference type="Pfam" id="PF16197">
    <property type="entry name" value="KAsynt_C_assoc"/>
    <property type="match status" value="1"/>
</dbReference>
<dbReference type="Pfam" id="PF00109">
    <property type="entry name" value="ketoacyl-synt"/>
    <property type="match status" value="1"/>
</dbReference>
<dbReference type="Pfam" id="PF02801">
    <property type="entry name" value="Ketoacyl-synt_C"/>
    <property type="match status" value="1"/>
</dbReference>
<dbReference type="Pfam" id="PF08659">
    <property type="entry name" value="KR"/>
    <property type="match status" value="1"/>
</dbReference>
<dbReference type="Pfam" id="PF23114">
    <property type="entry name" value="NAD-bd_HRPKS_sdrA"/>
    <property type="match status" value="1"/>
</dbReference>
<dbReference type="Pfam" id="PF21089">
    <property type="entry name" value="PKS_DH_N"/>
    <property type="match status" value="1"/>
</dbReference>
<dbReference type="Pfam" id="PF14765">
    <property type="entry name" value="PS-DH"/>
    <property type="match status" value="1"/>
</dbReference>
<dbReference type="SMART" id="SM00827">
    <property type="entry name" value="PKS_AT"/>
    <property type="match status" value="1"/>
</dbReference>
<dbReference type="SMART" id="SM00826">
    <property type="entry name" value="PKS_DH"/>
    <property type="match status" value="1"/>
</dbReference>
<dbReference type="SMART" id="SM00829">
    <property type="entry name" value="PKS_ER"/>
    <property type="match status" value="1"/>
</dbReference>
<dbReference type="SMART" id="SM00822">
    <property type="entry name" value="PKS_KR"/>
    <property type="match status" value="1"/>
</dbReference>
<dbReference type="SMART" id="SM00825">
    <property type="entry name" value="PKS_KS"/>
    <property type="match status" value="1"/>
</dbReference>
<dbReference type="SMART" id="SM00823">
    <property type="entry name" value="PKS_PP"/>
    <property type="match status" value="1"/>
</dbReference>
<dbReference type="SUPFAM" id="SSF47336">
    <property type="entry name" value="ACP-like"/>
    <property type="match status" value="1"/>
</dbReference>
<dbReference type="SUPFAM" id="SSF52151">
    <property type="entry name" value="FabD/lysophospholipase-like"/>
    <property type="match status" value="1"/>
</dbReference>
<dbReference type="SUPFAM" id="SSF50129">
    <property type="entry name" value="GroES-like"/>
    <property type="match status" value="1"/>
</dbReference>
<dbReference type="SUPFAM" id="SSF51735">
    <property type="entry name" value="NAD(P)-binding Rossmann-fold domains"/>
    <property type="match status" value="2"/>
</dbReference>
<dbReference type="SUPFAM" id="SSF55048">
    <property type="entry name" value="Probable ACP-binding domain of malonyl-CoA ACP transacylase"/>
    <property type="match status" value="1"/>
</dbReference>
<dbReference type="SUPFAM" id="SSF53901">
    <property type="entry name" value="Thiolase-like"/>
    <property type="match status" value="1"/>
</dbReference>
<dbReference type="PROSITE" id="PS50075">
    <property type="entry name" value="CARRIER"/>
    <property type="match status" value="1"/>
</dbReference>
<dbReference type="PROSITE" id="PS52004">
    <property type="entry name" value="KS3_2"/>
    <property type="match status" value="1"/>
</dbReference>
<dbReference type="PROSITE" id="PS00012">
    <property type="entry name" value="PHOSPHOPANTETHEINE"/>
    <property type="match status" value="1"/>
</dbReference>
<dbReference type="PROSITE" id="PS52019">
    <property type="entry name" value="PKS_MFAS_DH"/>
    <property type="match status" value="1"/>
</dbReference>
<proteinExistence type="evidence at protein level"/>
<gene>
    <name evidence="7" type="primary">curS1</name>
</gene>